<protein>
    <recommendedName>
        <fullName>Zinc finger CCHC domain-containing protein 8</fullName>
    </recommendedName>
    <alternativeName>
        <fullName>TRAMP-like complex RNA-binding factor ZCCHC8</fullName>
    </alternativeName>
</protein>
<accession>Q5R789</accession>
<keyword id="KW-0007">Acetylation</keyword>
<keyword id="KW-0175">Coiled coil</keyword>
<keyword id="KW-1017">Isopeptide bond</keyword>
<keyword id="KW-0479">Metal-binding</keyword>
<keyword id="KW-0507">mRNA processing</keyword>
<keyword id="KW-0508">mRNA splicing</keyword>
<keyword id="KW-0539">Nucleus</keyword>
<keyword id="KW-0597">Phosphoprotein</keyword>
<keyword id="KW-1185">Reference proteome</keyword>
<keyword id="KW-0747">Spliceosome</keyword>
<keyword id="KW-0832">Ubl conjugation</keyword>
<keyword id="KW-0862">Zinc</keyword>
<keyword id="KW-0863">Zinc-finger</keyword>
<name>ZCHC8_PONAB</name>
<gene>
    <name type="primary">ZCCHC8</name>
</gene>
<sequence>MAAEVYFGDLELFEPFDHPEESIPEPVHTRFKDDDEEDENGVGDAELRERLRQCEETIEQLRAENQELKRKLNILTRPSGILVNDTKLDGPILQILFMNNAISKQYHQEIEEFVSNLVKRFEEQQKNDVEKTSFNLLPQPSSIVLEEDHKVEEACAIKNNKEAFSVVGSVLYFTNFCLDKLGQPLLNENPQLSEGWEIPKYHQVFSHIVSLEGQEIQVKAKRPKPHCFNCGSEEHQMKDCPMPRNAARISEKRKEYMDACGEANNQNFQQRYHAEEVEERFGRFKPGVISEELQDALGVTDKSLPPFIYRMRQLGYPPGWLKEAELENSGLALYDGKDGTDGETEVGEIQQNKSVTYDLSKLVNYPGFNISTPRGIPDEWRIFGSIPMQACQQKDVFANYLTSNFQAPGVKSGNKRSSSHSSPGSPKKQKKESNSAGSPADMELDSDMEVPHGSQSSESFQFQPPLPPDTPPLPRGTPPPIFTPPLPKGTPPLTPSDSPQTRTASGAVDEDALTLEELEEQQRRIWAALEQAESLNSDSDAPVDTPLTGNSVASSPCPNELDLPIPEGKTSEKQTLDEPEVPEIFTDKSEAGHASSPDCEVTSLCQKKAELAPVNTEGALLDNGSVVPNCDISNGGSQKLVPADTSPSMATKIHSPIPDMSKFATGITPFEFENMAESTGMYLRIRSLLKNSPRNQQKNKKASE</sequence>
<comment type="function">
    <text evidence="1">Scaffolding subunit of the trimeric nuclear exosome targeting (NEXT) complex that is involved in the surveillance and turnover of aberrant transcripts and non-coding RNAs. NEXT functions as an RNA exosome cofactor that directs a subset of non-coding short-lived RNAs for exosomal degradation. May be involved in pre-mRNA splicing. It is required for 3'-end maturation of telomerase RNA component (TERC), TERC 3'-end targeting to the nuclear RNA exosome, and for telomerase function.</text>
</comment>
<comment type="subunit">
    <text evidence="1">Component of a nuclear TRAMP-like complex, an ATP-dependent exosome regulatory complex consisting of a helicase (MTREX), an oligadenylate polymerase (TENT4B or TENT4A), and a substrate specific RNA-binding factor (ZCCHC7 or ZCCHC8). Several TRAMP-like complexes exist with specific compositions and are associated with nuclear, or nucleolar RNA exosomes. Identified in the spliceosome C complex. Component of the nuclear exosome targeting (NEXT) complex composed of MTREX, ZCCHC8, and RBM7 that directs a subset of non-coding short-lived RNAs for exosomal degradation. Interacts with proteins involved in RNA processing and degradation such as MTREX and RBM7; interaction with MTREX enhances MTREX RNA helicase activity and bridges between RBM7 and MTREX. Interacts with TERC, the telomerase RNA component.</text>
</comment>
<comment type="subcellular location">
    <subcellularLocation>
        <location evidence="1">Nucleus</location>
        <location evidence="1">Nucleoplasm</location>
    </subcellularLocation>
    <text evidence="1">Excluded from nucleolus.</text>
</comment>
<comment type="domain">
    <text evidence="1">The C-terminal part (659-707) contributes to MTREX RNA helicase activity, in part, by enhancing its RNA-dependent ATPase activity.</text>
</comment>
<comment type="PTM">
    <text evidence="1">Phosphorylation at Thr-490 by GSK3 is triggered in cells entering mitosis.</text>
</comment>
<comment type="similarity">
    <text evidence="5">Belongs to the ZCCHC8 family.</text>
</comment>
<reference key="1">
    <citation type="submission" date="2004-11" db="EMBL/GenBank/DDBJ databases">
        <authorList>
            <consortium name="The German cDNA consortium"/>
        </authorList>
    </citation>
    <scope>NUCLEOTIDE SEQUENCE [LARGE SCALE MRNA]</scope>
    <source>
        <tissue>Kidney</tissue>
    </source>
</reference>
<evidence type="ECO:0000250" key="1">
    <source>
        <dbReference type="UniProtKB" id="Q6NZY4"/>
    </source>
</evidence>
<evidence type="ECO:0000255" key="2"/>
<evidence type="ECO:0000255" key="3">
    <source>
        <dbReference type="PROSITE-ProRule" id="PRU00047"/>
    </source>
</evidence>
<evidence type="ECO:0000256" key="4">
    <source>
        <dbReference type="SAM" id="MobiDB-lite"/>
    </source>
</evidence>
<evidence type="ECO:0000305" key="5"/>
<proteinExistence type="evidence at transcript level"/>
<feature type="initiator methionine" description="Removed" evidence="1">
    <location>
        <position position="1"/>
    </location>
</feature>
<feature type="chain" id="PRO_0000150962" description="Zinc finger CCHC domain-containing protein 8">
    <location>
        <begin position="2"/>
        <end position="704"/>
    </location>
</feature>
<feature type="zinc finger region" description="CCHC-type" evidence="3">
    <location>
        <begin position="225"/>
        <end position="242"/>
    </location>
</feature>
<feature type="region of interest" description="Disordered" evidence="4">
    <location>
        <begin position="16"/>
        <end position="43"/>
    </location>
</feature>
<feature type="region of interest" description="RBM7 binding" evidence="1">
    <location>
        <begin position="284"/>
        <end position="297"/>
    </location>
</feature>
<feature type="region of interest" description="RBM7 binding" evidence="1">
    <location>
        <begin position="307"/>
        <end position="322"/>
    </location>
</feature>
<feature type="region of interest" description="Disordered" evidence="4">
    <location>
        <begin position="407"/>
        <end position="516"/>
    </location>
</feature>
<feature type="region of interest" description="Disordered" evidence="4">
    <location>
        <begin position="529"/>
        <end position="599"/>
    </location>
</feature>
<feature type="region of interest" description="MTREX binding" evidence="1">
    <location>
        <begin position="656"/>
        <end position="704"/>
    </location>
</feature>
<feature type="coiled-coil region" evidence="2">
    <location>
        <begin position="43"/>
        <end position="78"/>
    </location>
</feature>
<feature type="coiled-coil region" evidence="2">
    <location>
        <begin position="514"/>
        <end position="538"/>
    </location>
</feature>
<feature type="compositionally biased region" description="Basic and acidic residues" evidence="4">
    <location>
        <begin position="16"/>
        <end position="33"/>
    </location>
</feature>
<feature type="compositionally biased region" description="Low complexity" evidence="4">
    <location>
        <begin position="454"/>
        <end position="463"/>
    </location>
</feature>
<feature type="compositionally biased region" description="Pro residues" evidence="4">
    <location>
        <begin position="464"/>
        <end position="494"/>
    </location>
</feature>
<feature type="compositionally biased region" description="Polar residues" evidence="4">
    <location>
        <begin position="547"/>
        <end position="557"/>
    </location>
</feature>
<feature type="modified residue" description="N-acetylalanine" evidence="1">
    <location>
        <position position="2"/>
    </location>
</feature>
<feature type="modified residue" description="Phosphothreonine" evidence="1">
    <location>
        <position position="340"/>
    </location>
</feature>
<feature type="modified residue" description="Phosphothreonine" evidence="1">
    <location>
        <position position="470"/>
    </location>
</feature>
<feature type="modified residue" description="Phosphothreonine" evidence="1">
    <location>
        <position position="477"/>
    </location>
</feature>
<feature type="modified residue" description="Phosphothreonine" evidence="1">
    <location>
        <position position="483"/>
    </location>
</feature>
<feature type="modified residue" description="Phosphothreonine" evidence="1">
    <location>
        <position position="490"/>
    </location>
</feature>
<feature type="modified residue" description="Phosphothreonine" evidence="1">
    <location>
        <position position="575"/>
    </location>
</feature>
<feature type="modified residue" description="Phosphoserine" evidence="1">
    <location>
        <position position="596"/>
    </location>
</feature>
<feature type="modified residue" description="Phosphothreonine" evidence="1">
    <location>
        <position position="645"/>
    </location>
</feature>
<feature type="modified residue" description="Phosphoserine" evidence="1">
    <location>
        <position position="646"/>
    </location>
</feature>
<feature type="modified residue" description="Phosphoserine" evidence="1">
    <location>
        <position position="655"/>
    </location>
</feature>
<feature type="modified residue" description="Phosphoserine" evidence="1">
    <location>
        <position position="692"/>
    </location>
</feature>
<feature type="cross-link" description="Glycyl lysine isopeptide (Lys-Gly) (interchain with G-Cter in SUMO2)" evidence="1">
    <location>
        <position position="411"/>
    </location>
</feature>
<organism>
    <name type="scientific">Pongo abelii</name>
    <name type="common">Sumatran orangutan</name>
    <name type="synonym">Pongo pygmaeus abelii</name>
    <dbReference type="NCBI Taxonomy" id="9601"/>
    <lineage>
        <taxon>Eukaryota</taxon>
        <taxon>Metazoa</taxon>
        <taxon>Chordata</taxon>
        <taxon>Craniata</taxon>
        <taxon>Vertebrata</taxon>
        <taxon>Euteleostomi</taxon>
        <taxon>Mammalia</taxon>
        <taxon>Eutheria</taxon>
        <taxon>Euarchontoglires</taxon>
        <taxon>Primates</taxon>
        <taxon>Haplorrhini</taxon>
        <taxon>Catarrhini</taxon>
        <taxon>Hominidae</taxon>
        <taxon>Pongo</taxon>
    </lineage>
</organism>
<dbReference type="EMBL" id="CR860229">
    <property type="protein sequence ID" value="CAH92371.1"/>
    <property type="molecule type" value="mRNA"/>
</dbReference>
<dbReference type="RefSeq" id="NP_001126396.1">
    <property type="nucleotide sequence ID" value="NM_001132924.2"/>
</dbReference>
<dbReference type="SMR" id="Q5R789"/>
<dbReference type="FunCoup" id="Q5R789">
    <property type="interactions" value="3599"/>
</dbReference>
<dbReference type="STRING" id="9601.ENSPPYP00000005774"/>
<dbReference type="GeneID" id="100173378"/>
<dbReference type="KEGG" id="pon:100173378"/>
<dbReference type="CTD" id="55596"/>
<dbReference type="eggNOG" id="KOG2673">
    <property type="taxonomic scope" value="Eukaryota"/>
</dbReference>
<dbReference type="InParanoid" id="Q5R789"/>
<dbReference type="OrthoDB" id="8026949at2759"/>
<dbReference type="Proteomes" id="UP000001595">
    <property type="component" value="Unplaced"/>
</dbReference>
<dbReference type="GO" id="GO:0071013">
    <property type="term" value="C:catalytic step 2 spliceosome"/>
    <property type="evidence" value="ECO:0007669"/>
    <property type="project" value="TreeGrafter"/>
</dbReference>
<dbReference type="GO" id="GO:0005654">
    <property type="term" value="C:nucleoplasm"/>
    <property type="evidence" value="ECO:0000250"/>
    <property type="project" value="UniProtKB"/>
</dbReference>
<dbReference type="GO" id="GO:0003723">
    <property type="term" value="F:RNA binding"/>
    <property type="evidence" value="ECO:0007669"/>
    <property type="project" value="TreeGrafter"/>
</dbReference>
<dbReference type="GO" id="GO:0008270">
    <property type="term" value="F:zinc ion binding"/>
    <property type="evidence" value="ECO:0007669"/>
    <property type="project" value="UniProtKB-KW"/>
</dbReference>
<dbReference type="GO" id="GO:0031124">
    <property type="term" value="P:mRNA 3'-end processing"/>
    <property type="evidence" value="ECO:0000250"/>
    <property type="project" value="UniProtKB"/>
</dbReference>
<dbReference type="GO" id="GO:0008380">
    <property type="term" value="P:RNA splicing"/>
    <property type="evidence" value="ECO:0007669"/>
    <property type="project" value="UniProtKB-KW"/>
</dbReference>
<dbReference type="InterPro" id="IPR052115">
    <property type="entry name" value="NEXT_complex_subunit_ZCCHC8"/>
</dbReference>
<dbReference type="InterPro" id="IPR006568">
    <property type="entry name" value="PSP_pro-rich"/>
</dbReference>
<dbReference type="InterPro" id="IPR001878">
    <property type="entry name" value="Znf_CCHC"/>
</dbReference>
<dbReference type="PANTHER" id="PTHR13316:SF0">
    <property type="entry name" value="ZINC FINGER CCHC DOMAIN-CONTAINING PROTEIN 8"/>
    <property type="match status" value="1"/>
</dbReference>
<dbReference type="PANTHER" id="PTHR13316">
    <property type="entry name" value="ZINC FINGER, CCHC DOMAIN CONTAINING 8"/>
    <property type="match status" value="1"/>
</dbReference>
<dbReference type="Pfam" id="PF04046">
    <property type="entry name" value="PSP"/>
    <property type="match status" value="1"/>
</dbReference>
<dbReference type="Pfam" id="PF00098">
    <property type="entry name" value="zf-CCHC"/>
    <property type="match status" value="1"/>
</dbReference>
<dbReference type="SMART" id="SM00581">
    <property type="entry name" value="PSP"/>
    <property type="match status" value="1"/>
</dbReference>
<dbReference type="SMART" id="SM00343">
    <property type="entry name" value="ZnF_C2HC"/>
    <property type="match status" value="1"/>
</dbReference>
<dbReference type="PROSITE" id="PS50158">
    <property type="entry name" value="ZF_CCHC"/>
    <property type="match status" value="1"/>
</dbReference>